<keyword id="KW-1185">Reference proteome</keyword>
<keyword id="KW-0687">Ribonucleoprotein</keyword>
<keyword id="KW-0689">Ribosomal protein</keyword>
<dbReference type="EMBL" id="CP000319">
    <property type="protein sequence ID" value="ABE64308.1"/>
    <property type="molecule type" value="Genomic_DNA"/>
</dbReference>
<dbReference type="RefSeq" id="WP_011511949.1">
    <property type="nucleotide sequence ID" value="NC_007964.1"/>
</dbReference>
<dbReference type="SMR" id="Q1QHI9"/>
<dbReference type="STRING" id="323097.Nham_3579"/>
<dbReference type="KEGG" id="nha:Nham_3579"/>
<dbReference type="eggNOG" id="COG0228">
    <property type="taxonomic scope" value="Bacteria"/>
</dbReference>
<dbReference type="HOGENOM" id="CLU_100590_3_1_5"/>
<dbReference type="OrthoDB" id="9807878at2"/>
<dbReference type="Proteomes" id="UP000001953">
    <property type="component" value="Chromosome"/>
</dbReference>
<dbReference type="GO" id="GO:0005737">
    <property type="term" value="C:cytoplasm"/>
    <property type="evidence" value="ECO:0007669"/>
    <property type="project" value="UniProtKB-ARBA"/>
</dbReference>
<dbReference type="GO" id="GO:0015935">
    <property type="term" value="C:small ribosomal subunit"/>
    <property type="evidence" value="ECO:0007669"/>
    <property type="project" value="TreeGrafter"/>
</dbReference>
<dbReference type="GO" id="GO:0003735">
    <property type="term" value="F:structural constituent of ribosome"/>
    <property type="evidence" value="ECO:0007669"/>
    <property type="project" value="InterPro"/>
</dbReference>
<dbReference type="GO" id="GO:0006412">
    <property type="term" value="P:translation"/>
    <property type="evidence" value="ECO:0007669"/>
    <property type="project" value="UniProtKB-UniRule"/>
</dbReference>
<dbReference type="FunFam" id="3.30.1320.10:FF:000008">
    <property type="entry name" value="30S ribosomal protein S16"/>
    <property type="match status" value="1"/>
</dbReference>
<dbReference type="Gene3D" id="3.30.1320.10">
    <property type="match status" value="1"/>
</dbReference>
<dbReference type="HAMAP" id="MF_00385">
    <property type="entry name" value="Ribosomal_bS16"/>
    <property type="match status" value="1"/>
</dbReference>
<dbReference type="InterPro" id="IPR000307">
    <property type="entry name" value="Ribosomal_bS16"/>
</dbReference>
<dbReference type="InterPro" id="IPR023803">
    <property type="entry name" value="Ribosomal_bS16_dom_sf"/>
</dbReference>
<dbReference type="NCBIfam" id="TIGR00002">
    <property type="entry name" value="S16"/>
    <property type="match status" value="1"/>
</dbReference>
<dbReference type="PANTHER" id="PTHR12919">
    <property type="entry name" value="30S RIBOSOMAL PROTEIN S16"/>
    <property type="match status" value="1"/>
</dbReference>
<dbReference type="PANTHER" id="PTHR12919:SF20">
    <property type="entry name" value="SMALL RIBOSOMAL SUBUNIT PROTEIN BS16M"/>
    <property type="match status" value="1"/>
</dbReference>
<dbReference type="Pfam" id="PF00886">
    <property type="entry name" value="Ribosomal_S16"/>
    <property type="match status" value="1"/>
</dbReference>
<dbReference type="SUPFAM" id="SSF54565">
    <property type="entry name" value="Ribosomal protein S16"/>
    <property type="match status" value="1"/>
</dbReference>
<gene>
    <name evidence="1" type="primary">rpsP</name>
    <name type="ordered locus">Nham_3579</name>
</gene>
<name>RS16_NITHX</name>
<feature type="chain" id="PRO_1000049302" description="Small ribosomal subunit protein bS16">
    <location>
        <begin position="1"/>
        <end position="110"/>
    </location>
</feature>
<feature type="region of interest" description="Disordered" evidence="2">
    <location>
        <begin position="84"/>
        <end position="110"/>
    </location>
</feature>
<feature type="compositionally biased region" description="Basic and acidic residues" evidence="2">
    <location>
        <begin position="90"/>
        <end position="103"/>
    </location>
</feature>
<protein>
    <recommendedName>
        <fullName evidence="1">Small ribosomal subunit protein bS16</fullName>
    </recommendedName>
    <alternativeName>
        <fullName evidence="3">30S ribosomal protein S16</fullName>
    </alternativeName>
</protein>
<comment type="similarity">
    <text evidence="1">Belongs to the bacterial ribosomal protein bS16 family.</text>
</comment>
<accession>Q1QHI9</accession>
<sequence length="110" mass="12394">MPVVIRLARAGTKKRPVYHVVVADSRYPRDGRFIERLGYFNPLMPKDNADRLKIDLDKVKAWLAKGAQPSDRVARFLDAAGVKKRTARNNPEKAVPRKERKAQAEAAAKS</sequence>
<proteinExistence type="inferred from homology"/>
<evidence type="ECO:0000255" key="1">
    <source>
        <dbReference type="HAMAP-Rule" id="MF_00385"/>
    </source>
</evidence>
<evidence type="ECO:0000256" key="2">
    <source>
        <dbReference type="SAM" id="MobiDB-lite"/>
    </source>
</evidence>
<evidence type="ECO:0000305" key="3"/>
<reference key="1">
    <citation type="submission" date="2006-03" db="EMBL/GenBank/DDBJ databases">
        <title>Complete sequence of chromosome of Nitrobacter hamburgensis X14.</title>
        <authorList>
            <consortium name="US DOE Joint Genome Institute"/>
            <person name="Copeland A."/>
            <person name="Lucas S."/>
            <person name="Lapidus A."/>
            <person name="Barry K."/>
            <person name="Detter J.C."/>
            <person name="Glavina del Rio T."/>
            <person name="Hammon N."/>
            <person name="Israni S."/>
            <person name="Dalin E."/>
            <person name="Tice H."/>
            <person name="Pitluck S."/>
            <person name="Chain P."/>
            <person name="Malfatti S."/>
            <person name="Shin M."/>
            <person name="Vergez L."/>
            <person name="Schmutz J."/>
            <person name="Larimer F."/>
            <person name="Land M."/>
            <person name="Hauser L."/>
            <person name="Kyrpides N."/>
            <person name="Ivanova N."/>
            <person name="Ward B."/>
            <person name="Arp D."/>
            <person name="Klotz M."/>
            <person name="Stein L."/>
            <person name="O'Mullan G."/>
            <person name="Starkenburg S."/>
            <person name="Sayavedra L."/>
            <person name="Poret-Peterson A.T."/>
            <person name="Gentry M.E."/>
            <person name="Bruce D."/>
            <person name="Richardson P."/>
        </authorList>
    </citation>
    <scope>NUCLEOTIDE SEQUENCE [LARGE SCALE GENOMIC DNA]</scope>
    <source>
        <strain>DSM 10229 / NCIMB 13809 / X14</strain>
    </source>
</reference>
<organism>
    <name type="scientific">Nitrobacter hamburgensis (strain DSM 10229 / NCIMB 13809 / X14)</name>
    <dbReference type="NCBI Taxonomy" id="323097"/>
    <lineage>
        <taxon>Bacteria</taxon>
        <taxon>Pseudomonadati</taxon>
        <taxon>Pseudomonadota</taxon>
        <taxon>Alphaproteobacteria</taxon>
        <taxon>Hyphomicrobiales</taxon>
        <taxon>Nitrobacteraceae</taxon>
        <taxon>Nitrobacter</taxon>
    </lineage>
</organism>